<accession>A4JIT1</accession>
<reference key="1">
    <citation type="submission" date="2007-03" db="EMBL/GenBank/DDBJ databases">
        <title>Complete sequence of chromosome 1 of Burkholderia vietnamiensis G4.</title>
        <authorList>
            <consortium name="US DOE Joint Genome Institute"/>
            <person name="Copeland A."/>
            <person name="Lucas S."/>
            <person name="Lapidus A."/>
            <person name="Barry K."/>
            <person name="Detter J.C."/>
            <person name="Glavina del Rio T."/>
            <person name="Hammon N."/>
            <person name="Israni S."/>
            <person name="Dalin E."/>
            <person name="Tice H."/>
            <person name="Pitluck S."/>
            <person name="Chain P."/>
            <person name="Malfatti S."/>
            <person name="Shin M."/>
            <person name="Vergez L."/>
            <person name="Schmutz J."/>
            <person name="Larimer F."/>
            <person name="Land M."/>
            <person name="Hauser L."/>
            <person name="Kyrpides N."/>
            <person name="Tiedje J."/>
            <person name="Richardson P."/>
        </authorList>
    </citation>
    <scope>NUCLEOTIDE SEQUENCE [LARGE SCALE GENOMIC DNA]</scope>
    <source>
        <strain>G4 / LMG 22486</strain>
    </source>
</reference>
<dbReference type="EC" id="6.3.5.-" evidence="1"/>
<dbReference type="EMBL" id="CP000614">
    <property type="protein sequence ID" value="ABO56184.1"/>
    <property type="molecule type" value="Genomic_DNA"/>
</dbReference>
<dbReference type="SMR" id="A4JIT1"/>
<dbReference type="KEGG" id="bvi:Bcep1808_3193"/>
<dbReference type="eggNOG" id="COG0721">
    <property type="taxonomic scope" value="Bacteria"/>
</dbReference>
<dbReference type="HOGENOM" id="CLU_105899_2_2_4"/>
<dbReference type="Proteomes" id="UP000002287">
    <property type="component" value="Chromosome 1"/>
</dbReference>
<dbReference type="GO" id="GO:0050566">
    <property type="term" value="F:asparaginyl-tRNA synthase (glutamine-hydrolyzing) activity"/>
    <property type="evidence" value="ECO:0007669"/>
    <property type="project" value="RHEA"/>
</dbReference>
<dbReference type="GO" id="GO:0005524">
    <property type="term" value="F:ATP binding"/>
    <property type="evidence" value="ECO:0007669"/>
    <property type="project" value="UniProtKB-KW"/>
</dbReference>
<dbReference type="GO" id="GO:0050567">
    <property type="term" value="F:glutaminyl-tRNA synthase (glutamine-hydrolyzing) activity"/>
    <property type="evidence" value="ECO:0007669"/>
    <property type="project" value="UniProtKB-UniRule"/>
</dbReference>
<dbReference type="GO" id="GO:0070681">
    <property type="term" value="P:glutaminyl-tRNAGln biosynthesis via transamidation"/>
    <property type="evidence" value="ECO:0007669"/>
    <property type="project" value="TreeGrafter"/>
</dbReference>
<dbReference type="GO" id="GO:0006450">
    <property type="term" value="P:regulation of translational fidelity"/>
    <property type="evidence" value="ECO:0007669"/>
    <property type="project" value="InterPro"/>
</dbReference>
<dbReference type="GO" id="GO:0006412">
    <property type="term" value="P:translation"/>
    <property type="evidence" value="ECO:0007669"/>
    <property type="project" value="UniProtKB-UniRule"/>
</dbReference>
<dbReference type="Gene3D" id="1.10.20.60">
    <property type="entry name" value="Glu-tRNAGln amidotransferase C subunit, N-terminal domain"/>
    <property type="match status" value="1"/>
</dbReference>
<dbReference type="HAMAP" id="MF_00122">
    <property type="entry name" value="GatC"/>
    <property type="match status" value="1"/>
</dbReference>
<dbReference type="InterPro" id="IPR036113">
    <property type="entry name" value="Asp/Glu-ADT_sf_sub_c"/>
</dbReference>
<dbReference type="InterPro" id="IPR003837">
    <property type="entry name" value="GatC"/>
</dbReference>
<dbReference type="NCBIfam" id="TIGR00135">
    <property type="entry name" value="gatC"/>
    <property type="match status" value="1"/>
</dbReference>
<dbReference type="PANTHER" id="PTHR15004">
    <property type="entry name" value="GLUTAMYL-TRNA(GLN) AMIDOTRANSFERASE SUBUNIT C, MITOCHONDRIAL"/>
    <property type="match status" value="1"/>
</dbReference>
<dbReference type="PANTHER" id="PTHR15004:SF0">
    <property type="entry name" value="GLUTAMYL-TRNA(GLN) AMIDOTRANSFERASE SUBUNIT C, MITOCHONDRIAL"/>
    <property type="match status" value="1"/>
</dbReference>
<dbReference type="Pfam" id="PF02686">
    <property type="entry name" value="GatC"/>
    <property type="match status" value="1"/>
</dbReference>
<dbReference type="SUPFAM" id="SSF141000">
    <property type="entry name" value="Glu-tRNAGln amidotransferase C subunit"/>
    <property type="match status" value="1"/>
</dbReference>
<name>GATC_BURVG</name>
<protein>
    <recommendedName>
        <fullName evidence="1">Aspartyl/glutamyl-tRNA(Asn/Gln) amidotransferase subunit C</fullName>
        <shortName evidence="1">Asp/Glu-ADT subunit C</shortName>
        <ecNumber evidence="1">6.3.5.-</ecNumber>
    </recommendedName>
</protein>
<organism>
    <name type="scientific">Burkholderia vietnamiensis (strain G4 / LMG 22486)</name>
    <name type="common">Burkholderia cepacia (strain R1808)</name>
    <dbReference type="NCBI Taxonomy" id="269482"/>
    <lineage>
        <taxon>Bacteria</taxon>
        <taxon>Pseudomonadati</taxon>
        <taxon>Pseudomonadota</taxon>
        <taxon>Betaproteobacteria</taxon>
        <taxon>Burkholderiales</taxon>
        <taxon>Burkholderiaceae</taxon>
        <taxon>Burkholderia</taxon>
        <taxon>Burkholderia cepacia complex</taxon>
    </lineage>
</organism>
<evidence type="ECO:0000255" key="1">
    <source>
        <dbReference type="HAMAP-Rule" id="MF_00122"/>
    </source>
</evidence>
<keyword id="KW-0067">ATP-binding</keyword>
<keyword id="KW-0436">Ligase</keyword>
<keyword id="KW-0547">Nucleotide-binding</keyword>
<keyword id="KW-0648">Protein biosynthesis</keyword>
<gene>
    <name evidence="1" type="primary">gatC</name>
    <name type="ordered locus">Bcep1808_3193</name>
</gene>
<comment type="function">
    <text evidence="1">Allows the formation of correctly charged Asn-tRNA(Asn) or Gln-tRNA(Gln) through the transamidation of misacylated Asp-tRNA(Asn) or Glu-tRNA(Gln) in organisms which lack either or both of asparaginyl-tRNA or glutaminyl-tRNA synthetases. The reaction takes place in the presence of glutamine and ATP through an activated phospho-Asp-tRNA(Asn) or phospho-Glu-tRNA(Gln).</text>
</comment>
<comment type="catalytic activity">
    <reaction evidence="1">
        <text>L-glutamyl-tRNA(Gln) + L-glutamine + ATP + H2O = L-glutaminyl-tRNA(Gln) + L-glutamate + ADP + phosphate + H(+)</text>
        <dbReference type="Rhea" id="RHEA:17521"/>
        <dbReference type="Rhea" id="RHEA-COMP:9681"/>
        <dbReference type="Rhea" id="RHEA-COMP:9684"/>
        <dbReference type="ChEBI" id="CHEBI:15377"/>
        <dbReference type="ChEBI" id="CHEBI:15378"/>
        <dbReference type="ChEBI" id="CHEBI:29985"/>
        <dbReference type="ChEBI" id="CHEBI:30616"/>
        <dbReference type="ChEBI" id="CHEBI:43474"/>
        <dbReference type="ChEBI" id="CHEBI:58359"/>
        <dbReference type="ChEBI" id="CHEBI:78520"/>
        <dbReference type="ChEBI" id="CHEBI:78521"/>
        <dbReference type="ChEBI" id="CHEBI:456216"/>
    </reaction>
</comment>
<comment type="catalytic activity">
    <reaction evidence="1">
        <text>L-aspartyl-tRNA(Asn) + L-glutamine + ATP + H2O = L-asparaginyl-tRNA(Asn) + L-glutamate + ADP + phosphate + 2 H(+)</text>
        <dbReference type="Rhea" id="RHEA:14513"/>
        <dbReference type="Rhea" id="RHEA-COMP:9674"/>
        <dbReference type="Rhea" id="RHEA-COMP:9677"/>
        <dbReference type="ChEBI" id="CHEBI:15377"/>
        <dbReference type="ChEBI" id="CHEBI:15378"/>
        <dbReference type="ChEBI" id="CHEBI:29985"/>
        <dbReference type="ChEBI" id="CHEBI:30616"/>
        <dbReference type="ChEBI" id="CHEBI:43474"/>
        <dbReference type="ChEBI" id="CHEBI:58359"/>
        <dbReference type="ChEBI" id="CHEBI:78515"/>
        <dbReference type="ChEBI" id="CHEBI:78516"/>
        <dbReference type="ChEBI" id="CHEBI:456216"/>
    </reaction>
</comment>
<comment type="subunit">
    <text evidence="1">Heterotrimer of A, B and C subunits.</text>
</comment>
<comment type="similarity">
    <text evidence="1">Belongs to the GatC family.</text>
</comment>
<sequence length="99" mass="10926">MALTLTDVKRIAHLARLEMADADAEHTLGQLNEFFGLVEQMQAVDTAGIAPLAHPIEQIQEVAQRLRDDAVTEVVNRDDNQRPAPAVQDGLYLVPKVIE</sequence>
<proteinExistence type="inferred from homology"/>
<feature type="chain" id="PRO_1000016095" description="Aspartyl/glutamyl-tRNA(Asn/Gln) amidotransferase subunit C">
    <location>
        <begin position="1"/>
        <end position="99"/>
    </location>
</feature>